<dbReference type="EMBL" id="CP001186">
    <property type="protein sequence ID" value="ACK94147.1"/>
    <property type="molecule type" value="Genomic_DNA"/>
</dbReference>
<dbReference type="RefSeq" id="WP_000267015.1">
    <property type="nucleotide sequence ID" value="NC_011772.1"/>
</dbReference>
<dbReference type="SMR" id="B7IKT7"/>
<dbReference type="KEGG" id="bcg:BCG9842_B0454"/>
<dbReference type="HOGENOM" id="CLU_095787_0_0_9"/>
<dbReference type="Proteomes" id="UP000006744">
    <property type="component" value="Chromosome"/>
</dbReference>
<dbReference type="GO" id="GO:0005886">
    <property type="term" value="C:plasma membrane"/>
    <property type="evidence" value="ECO:0007669"/>
    <property type="project" value="UniProtKB-SubCell"/>
</dbReference>
<dbReference type="GO" id="GO:0008381">
    <property type="term" value="F:mechanosensitive monoatomic ion channel activity"/>
    <property type="evidence" value="ECO:0007669"/>
    <property type="project" value="UniProtKB-UniRule"/>
</dbReference>
<dbReference type="FunFam" id="1.10.1200.120:FF:000001">
    <property type="entry name" value="Large-conductance mechanosensitive channel"/>
    <property type="match status" value="1"/>
</dbReference>
<dbReference type="Gene3D" id="1.10.1200.120">
    <property type="entry name" value="Large-conductance mechanosensitive channel, MscL, domain 1"/>
    <property type="match status" value="1"/>
</dbReference>
<dbReference type="HAMAP" id="MF_00115">
    <property type="entry name" value="MscL"/>
    <property type="match status" value="1"/>
</dbReference>
<dbReference type="InterPro" id="IPR019823">
    <property type="entry name" value="Mechanosensitive_channel_CS"/>
</dbReference>
<dbReference type="InterPro" id="IPR001185">
    <property type="entry name" value="MS_channel"/>
</dbReference>
<dbReference type="InterPro" id="IPR037673">
    <property type="entry name" value="MSC/AndL"/>
</dbReference>
<dbReference type="InterPro" id="IPR036019">
    <property type="entry name" value="MscL_channel"/>
</dbReference>
<dbReference type="NCBIfam" id="TIGR00220">
    <property type="entry name" value="mscL"/>
    <property type="match status" value="1"/>
</dbReference>
<dbReference type="NCBIfam" id="NF001843">
    <property type="entry name" value="PRK00567.1-4"/>
    <property type="match status" value="1"/>
</dbReference>
<dbReference type="NCBIfam" id="NF010560">
    <property type="entry name" value="PRK13955.1"/>
    <property type="match status" value="1"/>
</dbReference>
<dbReference type="PANTHER" id="PTHR30266:SF2">
    <property type="entry name" value="LARGE-CONDUCTANCE MECHANOSENSITIVE CHANNEL"/>
    <property type="match status" value="1"/>
</dbReference>
<dbReference type="PANTHER" id="PTHR30266">
    <property type="entry name" value="MECHANOSENSITIVE CHANNEL MSCL"/>
    <property type="match status" value="1"/>
</dbReference>
<dbReference type="Pfam" id="PF01741">
    <property type="entry name" value="MscL"/>
    <property type="match status" value="1"/>
</dbReference>
<dbReference type="PRINTS" id="PR01264">
    <property type="entry name" value="MECHCHANNEL"/>
</dbReference>
<dbReference type="SUPFAM" id="SSF81330">
    <property type="entry name" value="Gated mechanosensitive channel"/>
    <property type="match status" value="1"/>
</dbReference>
<dbReference type="PROSITE" id="PS01327">
    <property type="entry name" value="MSCL"/>
    <property type="match status" value="1"/>
</dbReference>
<sequence length="132" mass="14739">MWNEFKKFAFKGNVVDLAVGVVIGAAFGKIVSSLVKDIITPLLGMVLGGVNFTDLHFGYGKSAVMYGNFIQTIFDFLIIAASIFMFIKVFNKLTSKKEDEKEEEIPEPTKEEVLLGEIRDLLKQQNSSKDRA</sequence>
<organism>
    <name type="scientific">Bacillus cereus (strain G9842)</name>
    <dbReference type="NCBI Taxonomy" id="405531"/>
    <lineage>
        <taxon>Bacteria</taxon>
        <taxon>Bacillati</taxon>
        <taxon>Bacillota</taxon>
        <taxon>Bacilli</taxon>
        <taxon>Bacillales</taxon>
        <taxon>Bacillaceae</taxon>
        <taxon>Bacillus</taxon>
        <taxon>Bacillus cereus group</taxon>
    </lineage>
</organism>
<gene>
    <name evidence="1" type="primary">mscL</name>
    <name type="ordered locus">BCG9842_B0454</name>
</gene>
<comment type="function">
    <text evidence="1">Channel that opens in response to stretch forces in the membrane lipid bilayer. May participate in the regulation of osmotic pressure changes within the cell.</text>
</comment>
<comment type="subunit">
    <text evidence="1">Homopentamer.</text>
</comment>
<comment type="subcellular location">
    <subcellularLocation>
        <location evidence="1">Cell membrane</location>
        <topology evidence="1">Multi-pass membrane protein</topology>
    </subcellularLocation>
</comment>
<comment type="similarity">
    <text evidence="1">Belongs to the MscL family.</text>
</comment>
<keyword id="KW-1003">Cell membrane</keyword>
<keyword id="KW-0407">Ion channel</keyword>
<keyword id="KW-0406">Ion transport</keyword>
<keyword id="KW-0472">Membrane</keyword>
<keyword id="KW-0812">Transmembrane</keyword>
<keyword id="KW-1133">Transmembrane helix</keyword>
<keyword id="KW-0813">Transport</keyword>
<protein>
    <recommendedName>
        <fullName evidence="1">Large-conductance mechanosensitive channel</fullName>
    </recommendedName>
</protein>
<feature type="chain" id="PRO_1000117550" description="Large-conductance mechanosensitive channel">
    <location>
        <begin position="1"/>
        <end position="132"/>
    </location>
</feature>
<feature type="transmembrane region" description="Helical" evidence="1">
    <location>
        <begin position="14"/>
        <end position="34"/>
    </location>
</feature>
<feature type="transmembrane region" description="Helical" evidence="1">
    <location>
        <begin position="38"/>
        <end position="58"/>
    </location>
</feature>
<feature type="transmembrane region" description="Helical" evidence="1">
    <location>
        <begin position="67"/>
        <end position="87"/>
    </location>
</feature>
<evidence type="ECO:0000255" key="1">
    <source>
        <dbReference type="HAMAP-Rule" id="MF_00115"/>
    </source>
</evidence>
<reference key="1">
    <citation type="submission" date="2008-10" db="EMBL/GenBank/DDBJ databases">
        <title>Genome sequence of Bacillus cereus G9842.</title>
        <authorList>
            <person name="Dodson R.J."/>
            <person name="Durkin A.S."/>
            <person name="Rosovitz M.J."/>
            <person name="Rasko D.A."/>
            <person name="Hoffmaster A."/>
            <person name="Ravel J."/>
            <person name="Sutton G."/>
        </authorList>
    </citation>
    <scope>NUCLEOTIDE SEQUENCE [LARGE SCALE GENOMIC DNA]</scope>
    <source>
        <strain>G9842</strain>
    </source>
</reference>
<name>MSCL_BACC2</name>
<proteinExistence type="inferred from homology"/>
<accession>B7IKT7</accession>